<name>YDEK_ECOLI</name>
<proteinExistence type="uncertain"/>
<organism>
    <name type="scientific">Escherichia coli (strain K12)</name>
    <dbReference type="NCBI Taxonomy" id="83333"/>
    <lineage>
        <taxon>Bacteria</taxon>
        <taxon>Pseudomonadati</taxon>
        <taxon>Pseudomonadota</taxon>
        <taxon>Gammaproteobacteria</taxon>
        <taxon>Enterobacterales</taxon>
        <taxon>Enterobacteriaceae</taxon>
        <taxon>Escherichia</taxon>
    </lineage>
</organism>
<protein>
    <recommendedName>
        <fullName>Uncharacterized lipoprotein YdeK</fullName>
    </recommendedName>
    <alternativeName>
        <fullName>ORFT</fullName>
    </alternativeName>
</protein>
<comment type="subcellular location">
    <subcellularLocation>
        <location evidence="1">Cell membrane</location>
        <topology evidence="1">Lipid-anchor</topology>
    </subcellularLocation>
</comment>
<comment type="similarity">
    <text evidence="2">To E.coli YfaL.</text>
</comment>
<comment type="caution">
    <text evidence="2">Could be the product of a pseudogene.</text>
</comment>
<comment type="sequence caution" evidence="2">
    <conflict type="frameshift">
        <sequence resource="EMBL-CDS" id="CAA51730"/>
    </conflict>
</comment>
<dbReference type="EMBL" id="U00096">
    <property type="status" value="NOT_ANNOTATED_CDS"/>
    <property type="molecule type" value="Genomic_DNA"/>
</dbReference>
<dbReference type="EMBL" id="AP009048">
    <property type="protein sequence ID" value="BAA15190.2"/>
    <property type="molecule type" value="Genomic_DNA"/>
</dbReference>
<dbReference type="EMBL" id="X73295">
    <property type="protein sequence ID" value="CAA51730.1"/>
    <property type="status" value="ALT_FRAME"/>
    <property type="molecule type" value="Genomic_DNA"/>
</dbReference>
<dbReference type="PIR" id="A64905">
    <property type="entry name" value="A64905"/>
</dbReference>
<dbReference type="SMR" id="P32051"/>
<dbReference type="BioGRID" id="4260223">
    <property type="interactions" value="321"/>
</dbReference>
<dbReference type="FunCoup" id="P32051">
    <property type="interactions" value="20"/>
</dbReference>
<dbReference type="KEGG" id="ecj:JW1503"/>
<dbReference type="KEGG" id="ecoc:C3026_08735"/>
<dbReference type="PATRIC" id="fig|1411691.4.peg.757"/>
<dbReference type="EchoBASE" id="EB1728"/>
<dbReference type="eggNOG" id="COG2911">
    <property type="taxonomic scope" value="Bacteria"/>
</dbReference>
<dbReference type="eggNOG" id="COG3210">
    <property type="taxonomic scope" value="Bacteria"/>
</dbReference>
<dbReference type="HOGENOM" id="CLU_002551_8_2_6"/>
<dbReference type="InParanoid" id="P32051"/>
<dbReference type="OMA" id="GASDYTW"/>
<dbReference type="PhylomeDB" id="P32051"/>
<dbReference type="Proteomes" id="UP000000625">
    <property type="component" value="Chromosome"/>
</dbReference>
<dbReference type="GO" id="GO:0005886">
    <property type="term" value="C:plasma membrane"/>
    <property type="evidence" value="ECO:0007669"/>
    <property type="project" value="UniProtKB-SubCell"/>
</dbReference>
<dbReference type="InterPro" id="IPR051551">
    <property type="entry name" value="Autotransporter_adhesion"/>
</dbReference>
<dbReference type="InterPro" id="IPR013425">
    <property type="entry name" value="Autotrns_rpt"/>
</dbReference>
<dbReference type="InterPro" id="IPR024973">
    <property type="entry name" value="ESPR"/>
</dbReference>
<dbReference type="InterPro" id="IPR011050">
    <property type="entry name" value="Pectin_lyase_fold/virulence"/>
</dbReference>
<dbReference type="InterPro" id="IPR030895">
    <property type="entry name" value="T5SS_PEPC_rpt"/>
</dbReference>
<dbReference type="NCBIfam" id="TIGR02601">
    <property type="entry name" value="autotrns_rpt"/>
    <property type="match status" value="2"/>
</dbReference>
<dbReference type="NCBIfam" id="NF011422">
    <property type="entry name" value="PRK14849.1"/>
    <property type="match status" value="1"/>
</dbReference>
<dbReference type="NCBIfam" id="TIGR04393">
    <property type="entry name" value="rpt_T5SS_PEPC"/>
    <property type="match status" value="7"/>
</dbReference>
<dbReference type="PANTHER" id="PTHR35037">
    <property type="entry name" value="C-TERMINAL REGION OF AIDA-LIKE PROTEIN"/>
    <property type="match status" value="1"/>
</dbReference>
<dbReference type="PANTHER" id="PTHR35037:SF3">
    <property type="entry name" value="C-TERMINAL REGION OF AIDA-LIKE PROTEIN"/>
    <property type="match status" value="1"/>
</dbReference>
<dbReference type="Pfam" id="PF13018">
    <property type="entry name" value="ESPR"/>
    <property type="match status" value="1"/>
</dbReference>
<dbReference type="Pfam" id="PF12951">
    <property type="entry name" value="PATR"/>
    <property type="match status" value="2"/>
</dbReference>
<dbReference type="SUPFAM" id="SSF51126">
    <property type="entry name" value="Pectin lyase-like"/>
    <property type="match status" value="1"/>
</dbReference>
<dbReference type="PROSITE" id="PS51257">
    <property type="entry name" value="PROKAR_LIPOPROTEIN"/>
    <property type="match status" value="1"/>
</dbReference>
<accession>P32051</accession>
<accession>P76140</accession>
<accession>P77168</accession>
<keyword id="KW-1003">Cell membrane</keyword>
<keyword id="KW-0449">Lipoprotein</keyword>
<keyword id="KW-0472">Membrane</keyword>
<keyword id="KW-0564">Palmitate</keyword>
<keyword id="KW-1185">Reference proteome</keyword>
<keyword id="KW-0732">Signal</keyword>
<gene>
    <name type="primary">ydeK</name>
    <name type="synonym">orfT</name>
    <name type="ordered locus">b1510</name>
    <name type="ordered locus">JW1503</name>
</gene>
<feature type="signal peptide" evidence="1">
    <location>
        <begin position="1"/>
        <end position="18"/>
    </location>
</feature>
<feature type="chain" id="PRO_0000013845" description="Uncharacterized lipoprotein YdeK">
    <location>
        <begin position="19"/>
        <end position="1325"/>
    </location>
</feature>
<feature type="lipid moiety-binding region" description="N-palmitoyl cysteine" evidence="1">
    <location>
        <position position="19"/>
    </location>
</feature>
<feature type="lipid moiety-binding region" description="S-diacylglycerol cysteine" evidence="1">
    <location>
        <position position="19"/>
    </location>
</feature>
<feature type="sequence conflict" description="In Ref. 4; CAA51730." evidence="2" ref="4">
    <original>N</original>
    <variation>K</variation>
    <location>
        <position position="884"/>
    </location>
</feature>
<feature type="sequence conflict" description="In Ref. 4; CAA51730." evidence="2" ref="4">
    <original>M</original>
    <variation>S</variation>
    <location>
        <position position="1317"/>
    </location>
</feature>
<evidence type="ECO:0000255" key="1">
    <source>
        <dbReference type="PROSITE-ProRule" id="PRU00303"/>
    </source>
</evidence>
<evidence type="ECO:0000305" key="2"/>
<sequence length="1325" mass="136515">MNRIYRVIWNCTLQVFQACSELTRRAGKTSTVNLRKSSGLTTKFSRLTLGVLLALSGSASGASLEVDNDQITNIDTDVAYDAYLVGWYGTGVLNILAGGNASLTTITTSVIGANEDSEGTVNVLGGTWRLYDSGNNARPLNVGQSGTGTLNIKQKGHVDGGYLRLGSSTGGVGTVNVEGEDSVLTTELFEIGSYGTGSLNITDKGYVTSSIVAILGYQAGSNGQVVVEKGGEWLIKNNDSSIEFQIGNQGTGEATIREGGLVTAENTIIGGNATGIGTLNVQDQDSVITVRRLYNGYFGNGTVNISNNGLINNKEYSLVGVQDGSHGVVNVTDKGHWNFLGTGEAFRYIYIGDAGDGELNVSSEGKVDSGIITAGMKETGTGNITVKDKNSVITNLGTNLGYDGHGEMNISNQGLVVSNGGSSLGYGETGVGNVSITTGGMWEVNKNVYTTIGVAGVGNLNISDGGKFVSQNITFLGDKASGIGTLNLMDATSSFDTVGINVGNFGSGIVNVSNGATLNSTGYGFIGGNASGKGIVNISTDSLWNLKTSSTNAQLLQVGVLGTGELNITTGGIVKARDTQIALNDKSKGDVRVDGQNSLLETFNMYVGTSGTGTLTLTNNGTLNVEGGEVYLGVFEPAVGTLNIGAAHGEAAADAGFITNATKVEFGLGEGVFVFNHTNNSDAGYQVDMLITGDDKDGKVIHDAGHTVFNAGNTYSGKTLVNDGLLTIASHTADGVTGMGSSEVTIANPGTLDILASTNSAGDYTLTNALKGDGLMRVQLSSSDKMFGFTHATGTEFAGVAQLKDSTFTLERDNTAALTHAMLQSDSENTTSVKVGEQSIGGLAMNGGTIIFDTDIPAATLAEGYISVDTLVVGAGDYTWKGRNYQVNGTGDVLIDVPKPWNDPMANNPLTTLNLLEHDDSHVGVQLVKAQTVIGSGGSLTLRDLQGDEVEADKTLHIAQNGTVVAEGDYGFRLTTAPGNGLYVNYGLKALNIHGGQKLTLAEHGGAYGATADMSAKIGGEGDLAINTVRQVSLSNGQNDYQGATYVQMGTLRTDADGALGNTRELNISNAAIVDLNGSTQTVETFTGQMGSTVLFKEGALTVNKGGISQGELTGGGNLNVTGGTLAIEGLNARYNALTSISPNAEVSLDNTQGLGRGNIANDGLLTLKNVTGELRNSISGKGIVSATARTDVELDGDNSRFVGQFNIDTGSALSVNEQKNLGDASVINNGLLTISTERSWAMTHSISGSGDVTKLGTGILTLNNDSAAYQGTTDIVGGEIAFGSDSAINMASQHINIHNSGVMSGNVTTAGDMNVMPGGGTACR</sequence>
<reference key="1">
    <citation type="journal article" date="1996" name="DNA Res.">
        <title>A 570-kb DNA sequence of the Escherichia coli K-12 genome corresponding to the 28.0-40.1 min region on the linkage map.</title>
        <authorList>
            <person name="Aiba H."/>
            <person name="Baba T."/>
            <person name="Fujita K."/>
            <person name="Hayashi K."/>
            <person name="Inada T."/>
            <person name="Isono K."/>
            <person name="Itoh T."/>
            <person name="Kasai H."/>
            <person name="Kashimoto K."/>
            <person name="Kimura S."/>
            <person name="Kitakawa M."/>
            <person name="Kitagawa M."/>
            <person name="Makino K."/>
            <person name="Miki T."/>
            <person name="Mizobuchi K."/>
            <person name="Mori H."/>
            <person name="Mori T."/>
            <person name="Motomura K."/>
            <person name="Nakade S."/>
            <person name="Nakamura Y."/>
            <person name="Nashimoto H."/>
            <person name="Nishio Y."/>
            <person name="Oshima T."/>
            <person name="Saito N."/>
            <person name="Sampei G."/>
            <person name="Seki Y."/>
            <person name="Sivasundaram S."/>
            <person name="Tagami H."/>
            <person name="Takeda J."/>
            <person name="Takemoto K."/>
            <person name="Takeuchi Y."/>
            <person name="Wada C."/>
            <person name="Yamamoto Y."/>
            <person name="Horiuchi T."/>
        </authorList>
    </citation>
    <scope>NUCLEOTIDE SEQUENCE [LARGE SCALE GENOMIC DNA]</scope>
    <source>
        <strain>K12 / W3110 / ATCC 27325 / DSM 5911</strain>
    </source>
</reference>
<reference key="2">
    <citation type="journal article" date="1997" name="Science">
        <title>The complete genome sequence of Escherichia coli K-12.</title>
        <authorList>
            <person name="Blattner F.R."/>
            <person name="Plunkett G. III"/>
            <person name="Bloch C.A."/>
            <person name="Perna N.T."/>
            <person name="Burland V."/>
            <person name="Riley M."/>
            <person name="Collado-Vides J."/>
            <person name="Glasner J.D."/>
            <person name="Rode C.K."/>
            <person name="Mayhew G.F."/>
            <person name="Gregor J."/>
            <person name="Davis N.W."/>
            <person name="Kirkpatrick H.A."/>
            <person name="Goeden M.A."/>
            <person name="Rose D.J."/>
            <person name="Mau B."/>
            <person name="Shao Y."/>
        </authorList>
    </citation>
    <scope>NUCLEOTIDE SEQUENCE [LARGE SCALE GENOMIC DNA]</scope>
    <source>
        <strain>K12 / MG1655 / ATCC 47076</strain>
    </source>
</reference>
<reference key="3">
    <citation type="journal article" date="2006" name="Mol. Syst. Biol.">
        <title>Highly accurate genome sequences of Escherichia coli K-12 strains MG1655 and W3110.</title>
        <authorList>
            <person name="Hayashi K."/>
            <person name="Morooka N."/>
            <person name="Yamamoto Y."/>
            <person name="Fujita K."/>
            <person name="Isono K."/>
            <person name="Choi S."/>
            <person name="Ohtsubo E."/>
            <person name="Baba T."/>
            <person name="Wanner B.L."/>
            <person name="Mori H."/>
            <person name="Horiuchi T."/>
        </authorList>
    </citation>
    <scope>NUCLEOTIDE SEQUENCE [LARGE SCALE GENOMIC DNA]</scope>
    <source>
        <strain>K12 / W3110 / ATCC 27325 / DSM 5911</strain>
    </source>
</reference>
<reference key="4">
    <citation type="journal article" date="1993" name="Biochim. Biophys. Acta">
        <title>An Escherichia coli gene showing a potential ancestral relationship to the genes for the mitochondrial import site proteins ISP42 and MOM38.</title>
        <authorList>
            <person name="Cartwright P.J."/>
            <person name="Timms M.W."/>
            <person name="Lithgow T."/>
            <person name="Hoej P.B."/>
            <person name="Hoogenraad N.J."/>
        </authorList>
    </citation>
    <scope>NUCLEOTIDE SEQUENCE [GENOMIC DNA] OF 595-1325</scope>
</reference>